<organism>
    <name type="scientific">Vibrio vulnificus (strain CMCP6)</name>
    <dbReference type="NCBI Taxonomy" id="216895"/>
    <lineage>
        <taxon>Bacteria</taxon>
        <taxon>Pseudomonadati</taxon>
        <taxon>Pseudomonadota</taxon>
        <taxon>Gammaproteobacteria</taxon>
        <taxon>Vibrionales</taxon>
        <taxon>Vibrionaceae</taxon>
        <taxon>Vibrio</taxon>
    </lineage>
</organism>
<sequence length="118" mass="13860">MNTYAFNRELRLLTPEHYQNVFQQAHRAGSPHFTIIARNNNLSHPRLGLAVPKKQIKTAVGRNRFKRLARESFRNTQHQLPNKDFVVIAKKSAQDLSNEELFKLFDKLWHRLSRPSRG</sequence>
<proteinExistence type="inferred from homology"/>
<name>RNPA_VIBVU</name>
<protein>
    <recommendedName>
        <fullName evidence="1">Ribonuclease P protein component</fullName>
        <shortName evidence="1">RNase P protein</shortName>
        <shortName evidence="1">RNaseP protein</shortName>
        <ecNumber evidence="1">3.1.26.5</ecNumber>
    </recommendedName>
    <alternativeName>
        <fullName evidence="1">Protein C5</fullName>
    </alternativeName>
</protein>
<accession>Q8DDI3</accession>
<comment type="function">
    <text evidence="1">RNaseP catalyzes the removal of the 5'-leader sequence from pre-tRNA to produce the mature 5'-terminus. It can also cleave other RNA substrates such as 4.5S RNA. The protein component plays an auxiliary but essential role in vivo by binding to the 5'-leader sequence and broadening the substrate specificity of the ribozyme.</text>
</comment>
<comment type="catalytic activity">
    <reaction evidence="1">
        <text>Endonucleolytic cleavage of RNA, removing 5'-extranucleotides from tRNA precursor.</text>
        <dbReference type="EC" id="3.1.26.5"/>
    </reaction>
</comment>
<comment type="subunit">
    <text evidence="1">Consists of a catalytic RNA component (M1 or rnpB) and a protein subunit.</text>
</comment>
<comment type="similarity">
    <text evidence="1">Belongs to the RnpA family.</text>
</comment>
<dbReference type="EC" id="3.1.26.5" evidence="1"/>
<dbReference type="EMBL" id="AE016795">
    <property type="protein sequence ID" value="AAO09494.1"/>
    <property type="molecule type" value="Genomic_DNA"/>
</dbReference>
<dbReference type="SMR" id="Q8DDI3"/>
<dbReference type="KEGG" id="vvu:VV1_1005"/>
<dbReference type="HOGENOM" id="CLU_117179_11_0_6"/>
<dbReference type="Proteomes" id="UP000002275">
    <property type="component" value="Chromosome 1"/>
</dbReference>
<dbReference type="GO" id="GO:0030677">
    <property type="term" value="C:ribonuclease P complex"/>
    <property type="evidence" value="ECO:0007669"/>
    <property type="project" value="TreeGrafter"/>
</dbReference>
<dbReference type="GO" id="GO:0042781">
    <property type="term" value="F:3'-tRNA processing endoribonuclease activity"/>
    <property type="evidence" value="ECO:0007669"/>
    <property type="project" value="TreeGrafter"/>
</dbReference>
<dbReference type="GO" id="GO:0004526">
    <property type="term" value="F:ribonuclease P activity"/>
    <property type="evidence" value="ECO:0007669"/>
    <property type="project" value="UniProtKB-UniRule"/>
</dbReference>
<dbReference type="GO" id="GO:0000049">
    <property type="term" value="F:tRNA binding"/>
    <property type="evidence" value="ECO:0007669"/>
    <property type="project" value="UniProtKB-UniRule"/>
</dbReference>
<dbReference type="GO" id="GO:0001682">
    <property type="term" value="P:tRNA 5'-leader removal"/>
    <property type="evidence" value="ECO:0007669"/>
    <property type="project" value="UniProtKB-UniRule"/>
</dbReference>
<dbReference type="Gene3D" id="3.30.230.10">
    <property type="match status" value="1"/>
</dbReference>
<dbReference type="HAMAP" id="MF_00227">
    <property type="entry name" value="RNase_P"/>
    <property type="match status" value="1"/>
</dbReference>
<dbReference type="InterPro" id="IPR020568">
    <property type="entry name" value="Ribosomal_Su5_D2-typ_SF"/>
</dbReference>
<dbReference type="InterPro" id="IPR014721">
    <property type="entry name" value="Ribsml_uS5_D2-typ_fold_subgr"/>
</dbReference>
<dbReference type="InterPro" id="IPR000100">
    <property type="entry name" value="RNase_P"/>
</dbReference>
<dbReference type="InterPro" id="IPR020539">
    <property type="entry name" value="RNase_P_CS"/>
</dbReference>
<dbReference type="NCBIfam" id="TIGR00188">
    <property type="entry name" value="rnpA"/>
    <property type="match status" value="1"/>
</dbReference>
<dbReference type="PANTHER" id="PTHR33992">
    <property type="entry name" value="RIBONUCLEASE P PROTEIN COMPONENT"/>
    <property type="match status" value="1"/>
</dbReference>
<dbReference type="PANTHER" id="PTHR33992:SF1">
    <property type="entry name" value="RIBONUCLEASE P PROTEIN COMPONENT"/>
    <property type="match status" value="1"/>
</dbReference>
<dbReference type="Pfam" id="PF00825">
    <property type="entry name" value="Ribonuclease_P"/>
    <property type="match status" value="1"/>
</dbReference>
<dbReference type="SUPFAM" id="SSF54211">
    <property type="entry name" value="Ribosomal protein S5 domain 2-like"/>
    <property type="match status" value="1"/>
</dbReference>
<dbReference type="PROSITE" id="PS00648">
    <property type="entry name" value="RIBONUCLEASE_P"/>
    <property type="match status" value="1"/>
</dbReference>
<reference key="1">
    <citation type="submission" date="2002-12" db="EMBL/GenBank/DDBJ databases">
        <title>Complete genome sequence of Vibrio vulnificus CMCP6.</title>
        <authorList>
            <person name="Rhee J.H."/>
            <person name="Kim S.Y."/>
            <person name="Chung S.S."/>
            <person name="Kim J.J."/>
            <person name="Moon Y.H."/>
            <person name="Jeong H."/>
            <person name="Choy H.E."/>
        </authorList>
    </citation>
    <scope>NUCLEOTIDE SEQUENCE [LARGE SCALE GENOMIC DNA]</scope>
    <source>
        <strain>CMCP6</strain>
    </source>
</reference>
<keyword id="KW-0255">Endonuclease</keyword>
<keyword id="KW-0378">Hydrolase</keyword>
<keyword id="KW-0540">Nuclease</keyword>
<keyword id="KW-0694">RNA-binding</keyword>
<keyword id="KW-0819">tRNA processing</keyword>
<evidence type="ECO:0000255" key="1">
    <source>
        <dbReference type="HAMAP-Rule" id="MF_00227"/>
    </source>
</evidence>
<feature type="chain" id="PRO_0000198565" description="Ribonuclease P protein component">
    <location>
        <begin position="1"/>
        <end position="118"/>
    </location>
</feature>
<gene>
    <name evidence="1" type="primary">rnpA</name>
    <name type="ordered locus">VV1_1005</name>
</gene>